<evidence type="ECO:0000255" key="1">
    <source>
        <dbReference type="HAMAP-Rule" id="MF_00211"/>
    </source>
</evidence>
<protein>
    <recommendedName>
        <fullName evidence="1">Anthranilate phosphoribosyltransferase</fullName>
        <ecNumber evidence="1">2.4.2.18</ecNumber>
    </recommendedName>
</protein>
<comment type="function">
    <text evidence="1">Catalyzes the transfer of the phosphoribosyl group of 5-phosphorylribose-1-pyrophosphate (PRPP) to anthranilate to yield N-(5'-phosphoribosyl)-anthranilate (PRA).</text>
</comment>
<comment type="catalytic activity">
    <reaction evidence="1">
        <text>N-(5-phospho-beta-D-ribosyl)anthranilate + diphosphate = 5-phospho-alpha-D-ribose 1-diphosphate + anthranilate</text>
        <dbReference type="Rhea" id="RHEA:11768"/>
        <dbReference type="ChEBI" id="CHEBI:16567"/>
        <dbReference type="ChEBI" id="CHEBI:18277"/>
        <dbReference type="ChEBI" id="CHEBI:33019"/>
        <dbReference type="ChEBI" id="CHEBI:58017"/>
        <dbReference type="EC" id="2.4.2.18"/>
    </reaction>
</comment>
<comment type="cofactor">
    <cofactor evidence="1">
        <name>Mg(2+)</name>
        <dbReference type="ChEBI" id="CHEBI:18420"/>
    </cofactor>
    <text evidence="1">Binds 2 magnesium ions per monomer.</text>
</comment>
<comment type="pathway">
    <text evidence="1">Amino-acid biosynthesis; L-tryptophan biosynthesis; L-tryptophan from chorismate: step 2/5.</text>
</comment>
<comment type="subunit">
    <text evidence="1">Homodimer.</text>
</comment>
<comment type="similarity">
    <text evidence="1">Belongs to the anthranilate phosphoribosyltransferase family.</text>
</comment>
<proteinExistence type="inferred from homology"/>
<reference key="1">
    <citation type="submission" date="2007-08" db="EMBL/GenBank/DDBJ databases">
        <title>Complete sequence of Roseiflexus castenholzii DSM 13941.</title>
        <authorList>
            <consortium name="US DOE Joint Genome Institute"/>
            <person name="Copeland A."/>
            <person name="Lucas S."/>
            <person name="Lapidus A."/>
            <person name="Barry K."/>
            <person name="Glavina del Rio T."/>
            <person name="Dalin E."/>
            <person name="Tice H."/>
            <person name="Pitluck S."/>
            <person name="Thompson L.S."/>
            <person name="Brettin T."/>
            <person name="Bruce D."/>
            <person name="Detter J.C."/>
            <person name="Han C."/>
            <person name="Tapia R."/>
            <person name="Schmutz J."/>
            <person name="Larimer F."/>
            <person name="Land M."/>
            <person name="Hauser L."/>
            <person name="Kyrpides N."/>
            <person name="Mikhailova N."/>
            <person name="Bryant D.A."/>
            <person name="Hanada S."/>
            <person name="Tsukatani Y."/>
            <person name="Richardson P."/>
        </authorList>
    </citation>
    <scope>NUCLEOTIDE SEQUENCE [LARGE SCALE GENOMIC DNA]</scope>
    <source>
        <strain>DSM 13941 / HLO8</strain>
    </source>
</reference>
<gene>
    <name evidence="1" type="primary">trpD</name>
    <name type="ordered locus">Rcas_2153</name>
</gene>
<name>TRPD_ROSCS</name>
<keyword id="KW-0028">Amino-acid biosynthesis</keyword>
<keyword id="KW-0057">Aromatic amino acid biosynthesis</keyword>
<keyword id="KW-0328">Glycosyltransferase</keyword>
<keyword id="KW-0460">Magnesium</keyword>
<keyword id="KW-0479">Metal-binding</keyword>
<keyword id="KW-1185">Reference proteome</keyword>
<keyword id="KW-0808">Transferase</keyword>
<keyword id="KW-0822">Tryptophan biosynthesis</keyword>
<organism>
    <name type="scientific">Roseiflexus castenholzii (strain DSM 13941 / HLO8)</name>
    <dbReference type="NCBI Taxonomy" id="383372"/>
    <lineage>
        <taxon>Bacteria</taxon>
        <taxon>Bacillati</taxon>
        <taxon>Chloroflexota</taxon>
        <taxon>Chloroflexia</taxon>
        <taxon>Chloroflexales</taxon>
        <taxon>Roseiflexineae</taxon>
        <taxon>Roseiflexaceae</taxon>
        <taxon>Roseiflexus</taxon>
    </lineage>
</organism>
<sequence length="340" mass="35360">MPIRDQIIQIVRGHDLTEEQAAEAMEEIMTGVATPAQVAALLTALHLKGETDAEIAGMARVMRAKAIPVHFDGPLLDTCGTGGDSAGTFNISTTAAFIAAGAGATVAKHGNRAMSSVCGSADVLEGLGVTIDLDAAGVARCLEQAGIGFMFAQKFHPAMRFVGPVRREIGIRTIFNALGPLSNPAQARHQTLGVADPALAEKMARALYLLGAQHALVVHGHGGLDELTLSGPNLVIEVRAGHKPRRYEVSAGDLGLTPAPREALLGGDVSTNVAIVRAILSGEERGARRDVALLNAAAALVAADYAADLREGLQQARQSLESGAALARLERLITVSSINR</sequence>
<feature type="chain" id="PRO_1000078024" description="Anthranilate phosphoribosyltransferase">
    <location>
        <begin position="1"/>
        <end position="340"/>
    </location>
</feature>
<feature type="binding site" evidence="1">
    <location>
        <position position="80"/>
    </location>
    <ligand>
        <name>5-phospho-alpha-D-ribose 1-diphosphate</name>
        <dbReference type="ChEBI" id="CHEBI:58017"/>
    </ligand>
</feature>
<feature type="binding site" evidence="1">
    <location>
        <position position="80"/>
    </location>
    <ligand>
        <name>anthranilate</name>
        <dbReference type="ChEBI" id="CHEBI:16567"/>
        <label>1</label>
    </ligand>
</feature>
<feature type="binding site" evidence="1">
    <location>
        <begin position="83"/>
        <end position="84"/>
    </location>
    <ligand>
        <name>5-phospho-alpha-D-ribose 1-diphosphate</name>
        <dbReference type="ChEBI" id="CHEBI:58017"/>
    </ligand>
</feature>
<feature type="binding site" evidence="1">
    <location>
        <position position="88"/>
    </location>
    <ligand>
        <name>5-phospho-alpha-D-ribose 1-diphosphate</name>
        <dbReference type="ChEBI" id="CHEBI:58017"/>
    </ligand>
</feature>
<feature type="binding site" evidence="1">
    <location>
        <begin position="90"/>
        <end position="93"/>
    </location>
    <ligand>
        <name>5-phospho-alpha-D-ribose 1-diphosphate</name>
        <dbReference type="ChEBI" id="CHEBI:58017"/>
    </ligand>
</feature>
<feature type="binding site" evidence="1">
    <location>
        <position position="92"/>
    </location>
    <ligand>
        <name>Mg(2+)</name>
        <dbReference type="ChEBI" id="CHEBI:18420"/>
        <label>1</label>
    </ligand>
</feature>
<feature type="binding site" evidence="1">
    <location>
        <begin position="108"/>
        <end position="116"/>
    </location>
    <ligand>
        <name>5-phospho-alpha-D-ribose 1-diphosphate</name>
        <dbReference type="ChEBI" id="CHEBI:58017"/>
    </ligand>
</feature>
<feature type="binding site" evidence="1">
    <location>
        <position position="111"/>
    </location>
    <ligand>
        <name>anthranilate</name>
        <dbReference type="ChEBI" id="CHEBI:16567"/>
        <label>1</label>
    </ligand>
</feature>
<feature type="binding site" evidence="1">
    <location>
        <position position="120"/>
    </location>
    <ligand>
        <name>5-phospho-alpha-D-ribose 1-diphosphate</name>
        <dbReference type="ChEBI" id="CHEBI:58017"/>
    </ligand>
</feature>
<feature type="binding site" evidence="1">
    <location>
        <position position="166"/>
    </location>
    <ligand>
        <name>anthranilate</name>
        <dbReference type="ChEBI" id="CHEBI:16567"/>
        <label>2</label>
    </ligand>
</feature>
<feature type="binding site" evidence="1">
    <location>
        <position position="225"/>
    </location>
    <ligand>
        <name>Mg(2+)</name>
        <dbReference type="ChEBI" id="CHEBI:18420"/>
        <label>2</label>
    </ligand>
</feature>
<feature type="binding site" evidence="1">
    <location>
        <position position="226"/>
    </location>
    <ligand>
        <name>Mg(2+)</name>
        <dbReference type="ChEBI" id="CHEBI:18420"/>
        <label>1</label>
    </ligand>
</feature>
<feature type="binding site" evidence="1">
    <location>
        <position position="226"/>
    </location>
    <ligand>
        <name>Mg(2+)</name>
        <dbReference type="ChEBI" id="CHEBI:18420"/>
        <label>2</label>
    </ligand>
</feature>
<dbReference type="EC" id="2.4.2.18" evidence="1"/>
<dbReference type="EMBL" id="CP000804">
    <property type="protein sequence ID" value="ABU58237.1"/>
    <property type="molecule type" value="Genomic_DNA"/>
</dbReference>
<dbReference type="RefSeq" id="WP_012120661.1">
    <property type="nucleotide sequence ID" value="NC_009767.1"/>
</dbReference>
<dbReference type="SMR" id="A7NL64"/>
<dbReference type="STRING" id="383372.Rcas_2153"/>
<dbReference type="KEGG" id="rca:Rcas_2153"/>
<dbReference type="eggNOG" id="COG0547">
    <property type="taxonomic scope" value="Bacteria"/>
</dbReference>
<dbReference type="HOGENOM" id="CLU_034315_2_1_0"/>
<dbReference type="OrthoDB" id="9806430at2"/>
<dbReference type="UniPathway" id="UPA00035">
    <property type="reaction ID" value="UER00041"/>
</dbReference>
<dbReference type="Proteomes" id="UP000000263">
    <property type="component" value="Chromosome"/>
</dbReference>
<dbReference type="GO" id="GO:0005829">
    <property type="term" value="C:cytosol"/>
    <property type="evidence" value="ECO:0007669"/>
    <property type="project" value="TreeGrafter"/>
</dbReference>
<dbReference type="GO" id="GO:0004048">
    <property type="term" value="F:anthranilate phosphoribosyltransferase activity"/>
    <property type="evidence" value="ECO:0007669"/>
    <property type="project" value="UniProtKB-UniRule"/>
</dbReference>
<dbReference type="GO" id="GO:0000287">
    <property type="term" value="F:magnesium ion binding"/>
    <property type="evidence" value="ECO:0007669"/>
    <property type="project" value="UniProtKB-UniRule"/>
</dbReference>
<dbReference type="GO" id="GO:0000162">
    <property type="term" value="P:L-tryptophan biosynthetic process"/>
    <property type="evidence" value="ECO:0007669"/>
    <property type="project" value="UniProtKB-UniRule"/>
</dbReference>
<dbReference type="FunFam" id="3.40.1030.10:FF:000002">
    <property type="entry name" value="Anthranilate phosphoribosyltransferase"/>
    <property type="match status" value="1"/>
</dbReference>
<dbReference type="Gene3D" id="3.40.1030.10">
    <property type="entry name" value="Nucleoside phosphorylase/phosphoribosyltransferase catalytic domain"/>
    <property type="match status" value="1"/>
</dbReference>
<dbReference type="Gene3D" id="1.20.970.10">
    <property type="entry name" value="Transferase, Pyrimidine Nucleoside Phosphorylase, Chain C"/>
    <property type="match status" value="1"/>
</dbReference>
<dbReference type="HAMAP" id="MF_00211">
    <property type="entry name" value="TrpD"/>
    <property type="match status" value="1"/>
</dbReference>
<dbReference type="InterPro" id="IPR005940">
    <property type="entry name" value="Anthranilate_Pribosyl_Tfrase"/>
</dbReference>
<dbReference type="InterPro" id="IPR000312">
    <property type="entry name" value="Glycosyl_Trfase_fam3"/>
</dbReference>
<dbReference type="InterPro" id="IPR017459">
    <property type="entry name" value="Glycosyl_Trfase_fam3_N_dom"/>
</dbReference>
<dbReference type="InterPro" id="IPR036320">
    <property type="entry name" value="Glycosyl_Trfase_fam3_N_dom_sf"/>
</dbReference>
<dbReference type="InterPro" id="IPR035902">
    <property type="entry name" value="Nuc_phospho_transferase"/>
</dbReference>
<dbReference type="NCBIfam" id="TIGR01245">
    <property type="entry name" value="trpD"/>
    <property type="match status" value="1"/>
</dbReference>
<dbReference type="PANTHER" id="PTHR43285">
    <property type="entry name" value="ANTHRANILATE PHOSPHORIBOSYLTRANSFERASE"/>
    <property type="match status" value="1"/>
</dbReference>
<dbReference type="PANTHER" id="PTHR43285:SF2">
    <property type="entry name" value="ANTHRANILATE PHOSPHORIBOSYLTRANSFERASE"/>
    <property type="match status" value="1"/>
</dbReference>
<dbReference type="Pfam" id="PF02885">
    <property type="entry name" value="Glycos_trans_3N"/>
    <property type="match status" value="1"/>
</dbReference>
<dbReference type="Pfam" id="PF00591">
    <property type="entry name" value="Glycos_transf_3"/>
    <property type="match status" value="1"/>
</dbReference>
<dbReference type="SUPFAM" id="SSF52418">
    <property type="entry name" value="Nucleoside phosphorylase/phosphoribosyltransferase catalytic domain"/>
    <property type="match status" value="1"/>
</dbReference>
<dbReference type="SUPFAM" id="SSF47648">
    <property type="entry name" value="Nucleoside phosphorylase/phosphoribosyltransferase N-terminal domain"/>
    <property type="match status" value="1"/>
</dbReference>
<accession>A7NL64</accession>